<reference key="1">
    <citation type="journal article" date="1997" name="Nature">
        <title>The nucleotide sequence of Saccharomyces cerevisiae chromosome XVI.</title>
        <authorList>
            <person name="Bussey H."/>
            <person name="Storms R.K."/>
            <person name="Ahmed A."/>
            <person name="Albermann K."/>
            <person name="Allen E."/>
            <person name="Ansorge W."/>
            <person name="Araujo R."/>
            <person name="Aparicio A."/>
            <person name="Barrell B.G."/>
            <person name="Badcock K."/>
            <person name="Benes V."/>
            <person name="Botstein D."/>
            <person name="Bowman S."/>
            <person name="Brueckner M."/>
            <person name="Carpenter J."/>
            <person name="Cherry J.M."/>
            <person name="Chung E."/>
            <person name="Churcher C.M."/>
            <person name="Coster F."/>
            <person name="Davis K."/>
            <person name="Davis R.W."/>
            <person name="Dietrich F.S."/>
            <person name="Delius H."/>
            <person name="DiPaolo T."/>
            <person name="Dubois E."/>
            <person name="Duesterhoeft A."/>
            <person name="Duncan M."/>
            <person name="Floeth M."/>
            <person name="Fortin N."/>
            <person name="Friesen J.D."/>
            <person name="Fritz C."/>
            <person name="Goffeau A."/>
            <person name="Hall J."/>
            <person name="Hebling U."/>
            <person name="Heumann K."/>
            <person name="Hilbert H."/>
            <person name="Hillier L.W."/>
            <person name="Hunicke-Smith S."/>
            <person name="Hyman R.W."/>
            <person name="Johnston M."/>
            <person name="Kalman S."/>
            <person name="Kleine K."/>
            <person name="Komp C."/>
            <person name="Kurdi O."/>
            <person name="Lashkari D."/>
            <person name="Lew H."/>
            <person name="Lin A."/>
            <person name="Lin D."/>
            <person name="Louis E.J."/>
            <person name="Marathe R."/>
            <person name="Messenguy F."/>
            <person name="Mewes H.-W."/>
            <person name="Mirtipati S."/>
            <person name="Moestl D."/>
            <person name="Mueller-Auer S."/>
            <person name="Namath A."/>
            <person name="Nentwich U."/>
            <person name="Oefner P."/>
            <person name="Pearson D."/>
            <person name="Petel F.X."/>
            <person name="Pohl T.M."/>
            <person name="Purnelle B."/>
            <person name="Rajandream M.A."/>
            <person name="Rechmann S."/>
            <person name="Rieger M."/>
            <person name="Riles L."/>
            <person name="Roberts D."/>
            <person name="Schaefer M."/>
            <person name="Scharfe M."/>
            <person name="Scherens B."/>
            <person name="Schramm S."/>
            <person name="Schroeder M."/>
            <person name="Sdicu A.-M."/>
            <person name="Tettelin H."/>
            <person name="Urrestarazu L.A."/>
            <person name="Ushinsky S."/>
            <person name="Vierendeels F."/>
            <person name="Vissers S."/>
            <person name="Voss H."/>
            <person name="Walsh S.V."/>
            <person name="Wambutt R."/>
            <person name="Wang Y."/>
            <person name="Wedler E."/>
            <person name="Wedler H."/>
            <person name="Winnett E."/>
            <person name="Zhong W.-W."/>
            <person name="Zollner A."/>
            <person name="Vo D.H."/>
            <person name="Hani J."/>
        </authorList>
    </citation>
    <scope>NUCLEOTIDE SEQUENCE [LARGE SCALE GENOMIC DNA]</scope>
    <source>
        <strain>ATCC 204508 / S288c</strain>
    </source>
</reference>
<reference key="2">
    <citation type="journal article" date="2014" name="G3 (Bethesda)">
        <title>The reference genome sequence of Saccharomyces cerevisiae: Then and now.</title>
        <authorList>
            <person name="Engel S.R."/>
            <person name="Dietrich F.S."/>
            <person name="Fisk D.G."/>
            <person name="Binkley G."/>
            <person name="Balakrishnan R."/>
            <person name="Costanzo M.C."/>
            <person name="Dwight S.S."/>
            <person name="Hitz B.C."/>
            <person name="Karra K."/>
            <person name="Nash R.S."/>
            <person name="Weng S."/>
            <person name="Wong E.D."/>
            <person name="Lloyd P."/>
            <person name="Skrzypek M.S."/>
            <person name="Miyasato S.R."/>
            <person name="Simison M."/>
            <person name="Cherry J.M."/>
        </authorList>
    </citation>
    <scope>GENOME REANNOTATION</scope>
    <source>
        <strain>ATCC 204508 / S288c</strain>
    </source>
</reference>
<reference key="3">
    <citation type="journal article" date="2007" name="Genome Res.">
        <title>Approaching a complete repository of sequence-verified protein-encoding clones for Saccharomyces cerevisiae.</title>
        <authorList>
            <person name="Hu Y."/>
            <person name="Rolfs A."/>
            <person name="Bhullar B."/>
            <person name="Murthy T.V.S."/>
            <person name="Zhu C."/>
            <person name="Berger M.F."/>
            <person name="Camargo A.A."/>
            <person name="Kelley F."/>
            <person name="McCarron S."/>
            <person name="Jepson D."/>
            <person name="Richardson A."/>
            <person name="Raphael J."/>
            <person name="Moreira D."/>
            <person name="Taycher E."/>
            <person name="Zuo D."/>
            <person name="Mohr S."/>
            <person name="Kane M.F."/>
            <person name="Williamson J."/>
            <person name="Simpson A.J.G."/>
            <person name="Bulyk M.L."/>
            <person name="Harlow E."/>
            <person name="Marsischky G."/>
            <person name="Kolodner R.D."/>
            <person name="LaBaer J."/>
        </authorList>
    </citation>
    <scope>NUCLEOTIDE SEQUENCE [GENOMIC DNA]</scope>
    <source>
        <strain>ATCC 204508 / S288c</strain>
    </source>
</reference>
<reference key="4">
    <citation type="journal article" date="2003" name="Nature">
        <title>Global analysis of protein localization in budding yeast.</title>
        <authorList>
            <person name="Huh W.-K."/>
            <person name="Falvo J.V."/>
            <person name="Gerke L.C."/>
            <person name="Carroll A.S."/>
            <person name="Howson R.W."/>
            <person name="Weissman J.S."/>
            <person name="O'Shea E.K."/>
        </authorList>
    </citation>
    <scope>SUBCELLULAR LOCATION [LARGE SCALE ANALYSIS]</scope>
</reference>
<reference key="5">
    <citation type="journal article" date="2003" name="Nature">
        <title>Global analysis of protein expression in yeast.</title>
        <authorList>
            <person name="Ghaemmaghami S."/>
            <person name="Huh W.-K."/>
            <person name="Bower K."/>
            <person name="Howson R.W."/>
            <person name="Belle A."/>
            <person name="Dephoure N."/>
            <person name="O'Shea E.K."/>
            <person name="Weissman J.S."/>
        </authorList>
    </citation>
    <scope>LEVEL OF PROTEIN EXPRESSION [LARGE SCALE ANALYSIS]</scope>
</reference>
<accession>Q12350</accession>
<accession>D6W466</accession>
<organism>
    <name type="scientific">Saccharomyces cerevisiae (strain ATCC 204508 / S288c)</name>
    <name type="common">Baker's yeast</name>
    <dbReference type="NCBI Taxonomy" id="559292"/>
    <lineage>
        <taxon>Eukaryota</taxon>
        <taxon>Fungi</taxon>
        <taxon>Dikarya</taxon>
        <taxon>Ascomycota</taxon>
        <taxon>Saccharomycotina</taxon>
        <taxon>Saccharomycetes</taxon>
        <taxon>Saccharomycetales</taxon>
        <taxon>Saccharomycetaceae</taxon>
        <taxon>Saccharomyces</taxon>
    </lineage>
</organism>
<protein>
    <recommendedName>
        <fullName>J domain-containing protein 1</fullName>
    </recommendedName>
</protein>
<evidence type="ECO:0000255" key="1"/>
<evidence type="ECO:0000255" key="2">
    <source>
        <dbReference type="PROSITE-ProRule" id="PRU00286"/>
    </source>
</evidence>
<evidence type="ECO:0000269" key="3">
    <source>
    </source>
</evidence>
<evidence type="ECO:0000305" key="4"/>
<name>JID1_YEAST</name>
<proteinExistence type="evidence at protein level"/>
<sequence>MLHHKFVYPFLFKWHLSCVEKCPPQITFIAKYATANDKNGNRKLTIRDEQWPELADPTPYDIFGIPKAGSGNPKLDKKSLKKKYHRYVKLYHPDHSDNIQIFSSEKVTNSDSKSPLLLTSSEKLHRFKVISQAYDILCDPKKKIVYDTTRQGWTTSYSPRSNVNTENYQYAGSYGYHSNAQYEYWNAGTWEDANSMKNERIQENINPWTVIGIICGLAICIEGTALLAKIQESLSKAEFTHDESGLHLIQSYTNYGLDTDKFSRLRRFLWFRTWGLYKSKEDLDREAKINEEMIRKLKAAK</sequence>
<keyword id="KW-0143">Chaperone</keyword>
<keyword id="KW-0472">Membrane</keyword>
<keyword id="KW-0496">Mitochondrion</keyword>
<keyword id="KW-1185">Reference proteome</keyword>
<keyword id="KW-0812">Transmembrane</keyword>
<keyword id="KW-1133">Transmembrane helix</keyword>
<comment type="function">
    <text>Probable chaperone.</text>
</comment>
<comment type="subcellular location">
    <subcellularLocation>
        <location evidence="4">Mitochondrion membrane</location>
        <topology evidence="4">Single-pass membrane protein</topology>
    </subcellularLocation>
</comment>
<comment type="miscellaneous">
    <text evidence="3">Present with 414 molecules/cell in log phase SD medium.</text>
</comment>
<comment type="similarity">
    <text evidence="4">Belongs to the DnaJ family.</text>
</comment>
<dbReference type="EMBL" id="Z49219">
    <property type="protein sequence ID" value="CAA89178.1"/>
    <property type="molecule type" value="Genomic_DNA"/>
</dbReference>
<dbReference type="EMBL" id="Z71255">
    <property type="protein sequence ID" value="CAA95005.1"/>
    <property type="molecule type" value="Genomic_DNA"/>
</dbReference>
<dbReference type="EMBL" id="AY558065">
    <property type="protein sequence ID" value="AAS56391.1"/>
    <property type="molecule type" value="Genomic_DNA"/>
</dbReference>
<dbReference type="EMBL" id="BK006949">
    <property type="protein sequence ID" value="DAA11482.1"/>
    <property type="molecule type" value="Genomic_DNA"/>
</dbReference>
<dbReference type="PIR" id="S54082">
    <property type="entry name" value="S54082"/>
</dbReference>
<dbReference type="RefSeq" id="NP_015386.1">
    <property type="nucleotide sequence ID" value="NM_001184158.1"/>
</dbReference>
<dbReference type="BioGRID" id="36234">
    <property type="interactions" value="180"/>
</dbReference>
<dbReference type="FunCoup" id="Q12350">
    <property type="interactions" value="49"/>
</dbReference>
<dbReference type="MINT" id="Q12350"/>
<dbReference type="STRING" id="4932.YPR061C"/>
<dbReference type="PaxDb" id="4932-YPR061C"/>
<dbReference type="PeptideAtlas" id="Q12350"/>
<dbReference type="PRIDE" id="Q12350"/>
<dbReference type="EnsemblFungi" id="YPR061C_mRNA">
    <property type="protein sequence ID" value="YPR061C"/>
    <property type="gene ID" value="YPR061C"/>
</dbReference>
<dbReference type="GeneID" id="856174"/>
<dbReference type="KEGG" id="sce:YPR061C"/>
<dbReference type="AGR" id="SGD:S000006265"/>
<dbReference type="SGD" id="S000006265">
    <property type="gene designation" value="JID1"/>
</dbReference>
<dbReference type="VEuPathDB" id="FungiDB:YPR061C"/>
<dbReference type="eggNOG" id="ENOG502RYTK">
    <property type="taxonomic scope" value="Eukaryota"/>
</dbReference>
<dbReference type="HOGENOM" id="CLU_074165_0_0_1"/>
<dbReference type="InParanoid" id="Q12350"/>
<dbReference type="OMA" id="NAGTWED"/>
<dbReference type="OrthoDB" id="445556at2759"/>
<dbReference type="BioCyc" id="YEAST:G3O-34211-MONOMER"/>
<dbReference type="BioGRID-ORCS" id="856174">
    <property type="hits" value="0 hits in 10 CRISPR screens"/>
</dbReference>
<dbReference type="PRO" id="PR:Q12350"/>
<dbReference type="Proteomes" id="UP000002311">
    <property type="component" value="Chromosome XVI"/>
</dbReference>
<dbReference type="RNAct" id="Q12350">
    <property type="molecule type" value="protein"/>
</dbReference>
<dbReference type="GO" id="GO:0005743">
    <property type="term" value="C:mitochondrial inner membrane"/>
    <property type="evidence" value="ECO:0000314"/>
    <property type="project" value="SGD"/>
</dbReference>
<dbReference type="GO" id="GO:0005739">
    <property type="term" value="C:mitochondrion"/>
    <property type="evidence" value="ECO:0000314"/>
    <property type="project" value="SGD"/>
</dbReference>
<dbReference type="CDD" id="cd06257">
    <property type="entry name" value="DnaJ"/>
    <property type="match status" value="1"/>
</dbReference>
<dbReference type="FunFam" id="1.10.287.110:FF:000129">
    <property type="entry name" value="J domain-containing protein 1"/>
    <property type="match status" value="1"/>
</dbReference>
<dbReference type="Gene3D" id="1.10.287.110">
    <property type="entry name" value="DnaJ domain"/>
    <property type="match status" value="1"/>
</dbReference>
<dbReference type="InterPro" id="IPR050817">
    <property type="entry name" value="DjlA_DnaK_co-chaperone"/>
</dbReference>
<dbReference type="InterPro" id="IPR001623">
    <property type="entry name" value="DnaJ_domain"/>
</dbReference>
<dbReference type="InterPro" id="IPR018253">
    <property type="entry name" value="DnaJ_domain_CS"/>
</dbReference>
<dbReference type="InterPro" id="IPR036869">
    <property type="entry name" value="J_dom_sf"/>
</dbReference>
<dbReference type="PANTHER" id="PTHR24074">
    <property type="entry name" value="CO-CHAPERONE PROTEIN DJLA"/>
    <property type="match status" value="1"/>
</dbReference>
<dbReference type="PRINTS" id="PR00625">
    <property type="entry name" value="JDOMAIN"/>
</dbReference>
<dbReference type="SMART" id="SM00271">
    <property type="entry name" value="DnaJ"/>
    <property type="match status" value="1"/>
</dbReference>
<dbReference type="SUPFAM" id="SSF46565">
    <property type="entry name" value="Chaperone J-domain"/>
    <property type="match status" value="1"/>
</dbReference>
<dbReference type="PROSITE" id="PS00636">
    <property type="entry name" value="DNAJ_1"/>
    <property type="match status" value="1"/>
</dbReference>
<dbReference type="PROSITE" id="PS50076">
    <property type="entry name" value="DNAJ_2"/>
    <property type="match status" value="1"/>
</dbReference>
<gene>
    <name type="primary">JID1</name>
    <name type="ordered locus">YPR061C</name>
</gene>
<feature type="chain" id="PRO_0000240378" description="J domain-containing protein 1">
    <location>
        <begin position="1"/>
        <end position="301"/>
    </location>
</feature>
<feature type="transmembrane region" description="Helical" evidence="1">
    <location>
        <begin position="208"/>
        <end position="228"/>
    </location>
</feature>
<feature type="domain" description="J" evidence="2">
    <location>
        <begin position="58"/>
        <end position="150"/>
    </location>
</feature>